<proteinExistence type="inferred from homology"/>
<name>GYRB_ACIG6</name>
<keyword id="KW-0067">ATP-binding</keyword>
<keyword id="KW-0963">Cytoplasm</keyword>
<keyword id="KW-0238">DNA-binding</keyword>
<keyword id="KW-0413">Isomerase</keyword>
<keyword id="KW-0547">Nucleotide-binding</keyword>
<keyword id="KW-0799">Topoisomerase</keyword>
<comment type="function">
    <text evidence="1">A type II topoisomerase that negatively supercoils closed circular double-stranded (ds) DNA in an ATP-dependent manner to modulate DNA topology and maintain chromosomes in an underwound state. Negative supercoiling favors strand separation, and DNA replication, transcription, recombination and repair, all of which involve strand separation. Also able to catalyze the interconversion of other topological isomers of dsDNA rings, including catenanes and knotted rings. Type II topoisomerases break and join 2 DNA strands simultaneously in an ATP-dependent manner.</text>
</comment>
<comment type="catalytic activity">
    <reaction evidence="2">
        <text>ATP-dependent breakage, passage and rejoining of double-stranded DNA.</text>
        <dbReference type="EC" id="5.6.2.2"/>
    </reaction>
</comment>
<comment type="subunit">
    <text evidence="1">Heterotetramer, composed of two GyrA and two GyrB chains. In the heterotetramer, GyrA contains the active site tyrosine that forms a transient covalent intermediate with DNA, while GyrB binds cofactors and catalyzes ATP hydrolysis.</text>
</comment>
<comment type="subcellular location">
    <subcellularLocation>
        <location evidence="1">Cytoplasm</location>
    </subcellularLocation>
</comment>
<comment type="miscellaneous">
    <text evidence="1">Few gyrases are as efficient as E.coli at forming negative supercoils. Not all organisms have 2 type II topoisomerases; in organisms with a single type II topoisomerase this enzyme also has to decatenate newly replicated chromosomes.</text>
</comment>
<comment type="similarity">
    <text evidence="3">Belongs to the type II topoisomerase GyrB family.</text>
</comment>
<feature type="chain" id="PRO_0000145281" description="DNA gyrase subunit B">
    <location>
        <begin position="1" status="less than"/>
        <end position="388" status="greater than"/>
    </location>
</feature>
<feature type="domain" description="Toprim" evidence="2">
    <location>
        <begin position="312"/>
        <end position="388" status="greater than"/>
    </location>
</feature>
<feature type="site" description="Interaction with DNA" evidence="2">
    <location>
        <position position="343"/>
    </location>
</feature>
<feature type="site" description="Interaction with DNA" evidence="2">
    <location>
        <position position="346"/>
    </location>
</feature>
<feature type="sequence conflict" description="In Ref. 2; BAA11157." evidence="3" ref="2">
    <original>F</original>
    <variation>L</variation>
    <location>
        <position position="106"/>
    </location>
</feature>
<feature type="non-terminal residue">
    <location>
        <position position="1"/>
    </location>
</feature>
<feature type="non-terminal residue">
    <location>
        <position position="388"/>
    </location>
</feature>
<sequence>DNSYKVSGGLHGVGVSVVNALSKKLHLIIHRAGQTHEQEYCHGDSQYPLKVIGETDKSGTVIRFWPSELTFSQTIFSVEILARRLRELSFLNAGVRIVLRDERVNFEHVYDYEGGLSEFVKYINEGKTHLNEIFHFTTDTDSGIAVEVALQWNESYQENVRCFTNNIPQKDGGTHLAGFRAALTRGLNQYLESENILKKEKVAVTGDDAREGLTAIISVKVPDPKFSSQTKEKLVSSEVKPAVEQAMNKEFSAYLLENPQAAKSIAGKIIDAARARDAARKAREMTRRKSALDIAGLPGKLADCQEKDPALSELYLVEGDSAGGSAKQGRNRKMQAILPLKGKILNVERARFDKMISSQEVGTLITALGCGIGREEYNPDKLRYHKII</sequence>
<dbReference type="EC" id="5.6.2.2" evidence="2"/>
<dbReference type="EMBL" id="AB008687">
    <property type="protein sequence ID" value="BAA75404.1"/>
    <property type="molecule type" value="Genomic_DNA"/>
</dbReference>
<dbReference type="EMBL" id="D73432">
    <property type="protein sequence ID" value="BAA11157.1"/>
    <property type="molecule type" value="Genomic_DNA"/>
</dbReference>
<dbReference type="EMBL" id="D73417">
    <property type="protein sequence ID" value="BAA11142.1"/>
    <property type="molecule type" value="Genomic_DNA"/>
</dbReference>
<dbReference type="SMR" id="Q44271"/>
<dbReference type="GO" id="GO:0005737">
    <property type="term" value="C:cytoplasm"/>
    <property type="evidence" value="ECO:0007669"/>
    <property type="project" value="UniProtKB-SubCell"/>
</dbReference>
<dbReference type="GO" id="GO:0005524">
    <property type="term" value="F:ATP binding"/>
    <property type="evidence" value="ECO:0007669"/>
    <property type="project" value="UniProtKB-KW"/>
</dbReference>
<dbReference type="GO" id="GO:0003677">
    <property type="term" value="F:DNA binding"/>
    <property type="evidence" value="ECO:0007669"/>
    <property type="project" value="UniProtKB-KW"/>
</dbReference>
<dbReference type="GO" id="GO:0003918">
    <property type="term" value="F:DNA topoisomerase type II (double strand cut, ATP-hydrolyzing) activity"/>
    <property type="evidence" value="ECO:0007669"/>
    <property type="project" value="UniProtKB-EC"/>
</dbReference>
<dbReference type="GO" id="GO:0006265">
    <property type="term" value="P:DNA topological change"/>
    <property type="evidence" value="ECO:0007669"/>
    <property type="project" value="InterPro"/>
</dbReference>
<dbReference type="CDD" id="cd00822">
    <property type="entry name" value="TopoII_Trans_DNA_gyrase"/>
    <property type="match status" value="1"/>
</dbReference>
<dbReference type="FunFam" id="3.30.230.10:FF:000005">
    <property type="entry name" value="DNA gyrase subunit B"/>
    <property type="match status" value="1"/>
</dbReference>
<dbReference type="Gene3D" id="3.30.230.10">
    <property type="match status" value="1"/>
</dbReference>
<dbReference type="Gene3D" id="3.40.50.670">
    <property type="match status" value="1"/>
</dbReference>
<dbReference type="Gene3D" id="3.30.565.10">
    <property type="entry name" value="Histidine kinase-like ATPase, C-terminal domain"/>
    <property type="match status" value="1"/>
</dbReference>
<dbReference type="InterPro" id="IPR036890">
    <property type="entry name" value="HATPase_C_sf"/>
</dbReference>
<dbReference type="InterPro" id="IPR020568">
    <property type="entry name" value="Ribosomal_Su5_D2-typ_SF"/>
</dbReference>
<dbReference type="InterPro" id="IPR014721">
    <property type="entry name" value="Ribsml_uS5_D2-typ_fold_subgr"/>
</dbReference>
<dbReference type="InterPro" id="IPR001241">
    <property type="entry name" value="Topo_IIA"/>
</dbReference>
<dbReference type="InterPro" id="IPR013760">
    <property type="entry name" value="Topo_IIA-like_dom_sf"/>
</dbReference>
<dbReference type="InterPro" id="IPR000565">
    <property type="entry name" value="Topo_IIA_B"/>
</dbReference>
<dbReference type="InterPro" id="IPR013759">
    <property type="entry name" value="Topo_IIA_B_C"/>
</dbReference>
<dbReference type="InterPro" id="IPR013506">
    <property type="entry name" value="Topo_IIA_bsu_dom2"/>
</dbReference>
<dbReference type="InterPro" id="IPR018522">
    <property type="entry name" value="TopoIIA_CS"/>
</dbReference>
<dbReference type="InterPro" id="IPR006171">
    <property type="entry name" value="TOPRIM_dom"/>
</dbReference>
<dbReference type="PANTHER" id="PTHR45866:SF1">
    <property type="entry name" value="DNA GYRASE SUBUNIT B, MITOCHONDRIAL"/>
    <property type="match status" value="1"/>
</dbReference>
<dbReference type="PANTHER" id="PTHR45866">
    <property type="entry name" value="DNA GYRASE/TOPOISOMERASE SUBUNIT B"/>
    <property type="match status" value="1"/>
</dbReference>
<dbReference type="Pfam" id="PF00204">
    <property type="entry name" value="DNA_gyraseB"/>
    <property type="match status" value="1"/>
</dbReference>
<dbReference type="Pfam" id="PF01751">
    <property type="entry name" value="Toprim"/>
    <property type="match status" value="1"/>
</dbReference>
<dbReference type="PRINTS" id="PR01159">
    <property type="entry name" value="DNAGYRASEB"/>
</dbReference>
<dbReference type="PRINTS" id="PR00418">
    <property type="entry name" value="TPI2FAMILY"/>
</dbReference>
<dbReference type="SMART" id="SM00433">
    <property type="entry name" value="TOP2c"/>
    <property type="match status" value="1"/>
</dbReference>
<dbReference type="SUPFAM" id="SSF55874">
    <property type="entry name" value="ATPase domain of HSP90 chaperone/DNA topoisomerase II/histidine kinase"/>
    <property type="match status" value="1"/>
</dbReference>
<dbReference type="SUPFAM" id="SSF54211">
    <property type="entry name" value="Ribosomal protein S5 domain 2-like"/>
    <property type="match status" value="1"/>
</dbReference>
<dbReference type="SUPFAM" id="SSF56719">
    <property type="entry name" value="Type II DNA topoisomerase"/>
    <property type="match status" value="1"/>
</dbReference>
<dbReference type="PROSITE" id="PS00177">
    <property type="entry name" value="TOPOISOMERASE_II"/>
    <property type="match status" value="1"/>
</dbReference>
<dbReference type="PROSITE" id="PS50880">
    <property type="entry name" value="TOPRIM"/>
    <property type="match status" value="1"/>
</dbReference>
<organism>
    <name type="scientific">Acinetobacter genomosp. 6</name>
    <dbReference type="NCBI Taxonomy" id="106646"/>
    <lineage>
        <taxon>Bacteria</taxon>
        <taxon>Pseudomonadati</taxon>
        <taxon>Pseudomonadota</taxon>
        <taxon>Gammaproteobacteria</taxon>
        <taxon>Moraxellales</taxon>
        <taxon>Moraxellaceae</taxon>
        <taxon>Acinetobacter</taxon>
    </lineage>
</organism>
<reference key="1">
    <citation type="journal article" date="1999" name="Int. J. Syst. Bacteriol.">
        <title>Phylogenetic structures of the genus Acinetobacter based on gyrB sequences: comparison with the grouping by DNA-DNA hybridization.</title>
        <authorList>
            <person name="Yamamoto S."/>
            <person name="Bouvet P.J.M."/>
            <person name="Harayama S."/>
        </authorList>
    </citation>
    <scope>NUCLEOTIDE SEQUENCE [GENOMIC DNA]</scope>
    <source>
        <strain>ATCC 17979 / CCUG 26492 / CIP A165</strain>
    </source>
</reference>
<reference key="2">
    <citation type="journal article" date="1996" name="Int. J. Syst. Bacteriol.">
        <title>Phylogenetic analysis of Acinetobacter strains based on the nucleotide sequences of gyrB genes and on the amino acid sequences of their products.</title>
        <authorList>
            <person name="Yamamoto S."/>
            <person name="Harayama S."/>
        </authorList>
    </citation>
    <scope>NUCLEOTIDE SEQUENCE [GENOMIC DNA] OF 3-118 AND 289-388</scope>
    <source>
        <strain>ATCC 17979 / CCUG 26492 / CIP A165</strain>
    </source>
</reference>
<protein>
    <recommendedName>
        <fullName>DNA gyrase subunit B</fullName>
        <ecNumber evidence="2">5.6.2.2</ecNumber>
    </recommendedName>
</protein>
<evidence type="ECO:0000250" key="1">
    <source>
        <dbReference type="UniProtKB" id="P0AES6"/>
    </source>
</evidence>
<evidence type="ECO:0000255" key="2">
    <source>
        <dbReference type="PROSITE-ProRule" id="PRU00995"/>
    </source>
</evidence>
<evidence type="ECO:0000305" key="3"/>
<accession>Q44271</accession>
<accession>Q60168</accession>
<accession>Q9ZA07</accession>
<gene>
    <name type="primary">gyrB</name>
</gene>